<comment type="function">
    <text evidence="1">Converts 2C-methyl-D-erythritol 2,4-cyclodiphosphate (ME-2,4cPP) into 1-hydroxy-2-methyl-2-(E)-butenyl 4-diphosphate.</text>
</comment>
<comment type="catalytic activity">
    <reaction evidence="1">
        <text>(2E)-4-hydroxy-3-methylbut-2-enyl diphosphate + oxidized [flavodoxin] + H2O + 2 H(+) = 2-C-methyl-D-erythritol 2,4-cyclic diphosphate + reduced [flavodoxin]</text>
        <dbReference type="Rhea" id="RHEA:43604"/>
        <dbReference type="Rhea" id="RHEA-COMP:10622"/>
        <dbReference type="Rhea" id="RHEA-COMP:10623"/>
        <dbReference type="ChEBI" id="CHEBI:15377"/>
        <dbReference type="ChEBI" id="CHEBI:15378"/>
        <dbReference type="ChEBI" id="CHEBI:57618"/>
        <dbReference type="ChEBI" id="CHEBI:58210"/>
        <dbReference type="ChEBI" id="CHEBI:58483"/>
        <dbReference type="ChEBI" id="CHEBI:128753"/>
        <dbReference type="EC" id="1.17.7.3"/>
    </reaction>
</comment>
<comment type="cofactor">
    <cofactor evidence="1">
        <name>[4Fe-4S] cluster</name>
        <dbReference type="ChEBI" id="CHEBI:49883"/>
    </cofactor>
    <text evidence="1">Binds 1 [4Fe-4S] cluster.</text>
</comment>
<comment type="pathway">
    <text evidence="1">Isoprenoid biosynthesis; isopentenyl diphosphate biosynthesis via DXP pathway; isopentenyl diphosphate from 1-deoxy-D-xylulose 5-phosphate: step 5/6.</text>
</comment>
<comment type="similarity">
    <text evidence="1">Belongs to the IspG family.</text>
</comment>
<protein>
    <recommendedName>
        <fullName evidence="1">4-hydroxy-3-methylbut-2-en-1-yl diphosphate synthase (flavodoxin)</fullName>
        <ecNumber evidence="1">1.17.7.3</ecNumber>
    </recommendedName>
    <alternativeName>
        <fullName evidence="1">1-hydroxy-2-methyl-2-(E)-butenyl 4-diphosphate synthase</fullName>
    </alternativeName>
</protein>
<gene>
    <name evidence="1" type="primary">ispG</name>
    <name type="ordered locus">Francci3_3573</name>
</gene>
<keyword id="KW-0004">4Fe-4S</keyword>
<keyword id="KW-0408">Iron</keyword>
<keyword id="KW-0411">Iron-sulfur</keyword>
<keyword id="KW-0414">Isoprene biosynthesis</keyword>
<keyword id="KW-0479">Metal-binding</keyword>
<keyword id="KW-0560">Oxidoreductase</keyword>
<keyword id="KW-1185">Reference proteome</keyword>
<feature type="chain" id="PRO_1000123448" description="4-hydroxy-3-methylbut-2-en-1-yl diphosphate synthase (flavodoxin)">
    <location>
        <begin position="1"/>
        <end position="384"/>
    </location>
</feature>
<feature type="binding site" evidence="1">
    <location>
        <position position="280"/>
    </location>
    <ligand>
        <name>[4Fe-4S] cluster</name>
        <dbReference type="ChEBI" id="CHEBI:49883"/>
    </ligand>
</feature>
<feature type="binding site" evidence="1">
    <location>
        <position position="283"/>
    </location>
    <ligand>
        <name>[4Fe-4S] cluster</name>
        <dbReference type="ChEBI" id="CHEBI:49883"/>
    </ligand>
</feature>
<feature type="binding site" evidence="1">
    <location>
        <position position="315"/>
    </location>
    <ligand>
        <name>[4Fe-4S] cluster</name>
        <dbReference type="ChEBI" id="CHEBI:49883"/>
    </ligand>
</feature>
<feature type="binding site" evidence="1">
    <location>
        <position position="322"/>
    </location>
    <ligand>
        <name>[4Fe-4S] cluster</name>
        <dbReference type="ChEBI" id="CHEBI:49883"/>
    </ligand>
</feature>
<dbReference type="EC" id="1.17.7.3" evidence="1"/>
<dbReference type="EMBL" id="CP000249">
    <property type="protein sequence ID" value="ABD12925.1"/>
    <property type="molecule type" value="Genomic_DNA"/>
</dbReference>
<dbReference type="RefSeq" id="WP_011437949.1">
    <property type="nucleotide sequence ID" value="NZ_JENI01000005.1"/>
</dbReference>
<dbReference type="SMR" id="Q2J717"/>
<dbReference type="STRING" id="106370.Francci3_3573"/>
<dbReference type="KEGG" id="fra:Francci3_3573"/>
<dbReference type="eggNOG" id="COG0821">
    <property type="taxonomic scope" value="Bacteria"/>
</dbReference>
<dbReference type="HOGENOM" id="CLU_042258_0_0_11"/>
<dbReference type="OrthoDB" id="9803214at2"/>
<dbReference type="PhylomeDB" id="Q2J717"/>
<dbReference type="UniPathway" id="UPA00056">
    <property type="reaction ID" value="UER00096"/>
</dbReference>
<dbReference type="Proteomes" id="UP000001937">
    <property type="component" value="Chromosome"/>
</dbReference>
<dbReference type="GO" id="GO:0051539">
    <property type="term" value="F:4 iron, 4 sulfur cluster binding"/>
    <property type="evidence" value="ECO:0007669"/>
    <property type="project" value="UniProtKB-UniRule"/>
</dbReference>
<dbReference type="GO" id="GO:0046429">
    <property type="term" value="F:4-hydroxy-3-methylbut-2-en-1-yl diphosphate synthase activity (ferredoxin)"/>
    <property type="evidence" value="ECO:0007669"/>
    <property type="project" value="UniProtKB-UniRule"/>
</dbReference>
<dbReference type="GO" id="GO:0141197">
    <property type="term" value="F:4-hydroxy-3-methylbut-2-enyl-diphosphate synthase activity (flavodoxin)"/>
    <property type="evidence" value="ECO:0007669"/>
    <property type="project" value="UniProtKB-EC"/>
</dbReference>
<dbReference type="GO" id="GO:0005506">
    <property type="term" value="F:iron ion binding"/>
    <property type="evidence" value="ECO:0007669"/>
    <property type="project" value="InterPro"/>
</dbReference>
<dbReference type="GO" id="GO:0019288">
    <property type="term" value="P:isopentenyl diphosphate biosynthetic process, methylerythritol 4-phosphate pathway"/>
    <property type="evidence" value="ECO:0007669"/>
    <property type="project" value="UniProtKB-UniRule"/>
</dbReference>
<dbReference type="GO" id="GO:0016114">
    <property type="term" value="P:terpenoid biosynthetic process"/>
    <property type="evidence" value="ECO:0007669"/>
    <property type="project" value="InterPro"/>
</dbReference>
<dbReference type="FunFam" id="3.20.20.20:FF:000001">
    <property type="entry name" value="4-hydroxy-3-methylbut-2-en-1-yl diphosphate synthase (flavodoxin)"/>
    <property type="match status" value="1"/>
</dbReference>
<dbReference type="FunFam" id="3.30.413.10:FF:000001">
    <property type="entry name" value="4-hydroxy-3-methylbut-2-en-1-yl diphosphate synthase (flavodoxin)"/>
    <property type="match status" value="1"/>
</dbReference>
<dbReference type="Gene3D" id="3.20.20.20">
    <property type="entry name" value="Dihydropteroate synthase-like"/>
    <property type="match status" value="1"/>
</dbReference>
<dbReference type="Gene3D" id="3.30.413.10">
    <property type="entry name" value="Sulfite Reductase Hemoprotein, domain 1"/>
    <property type="match status" value="1"/>
</dbReference>
<dbReference type="HAMAP" id="MF_00159">
    <property type="entry name" value="IspG"/>
    <property type="match status" value="1"/>
</dbReference>
<dbReference type="InterPro" id="IPR011005">
    <property type="entry name" value="Dihydropteroate_synth-like_sf"/>
</dbReference>
<dbReference type="InterPro" id="IPR016425">
    <property type="entry name" value="IspG_bac"/>
</dbReference>
<dbReference type="InterPro" id="IPR004588">
    <property type="entry name" value="IspG_bac-typ"/>
</dbReference>
<dbReference type="InterPro" id="IPR045854">
    <property type="entry name" value="NO2/SO3_Rdtase_4Fe4S_sf"/>
</dbReference>
<dbReference type="NCBIfam" id="TIGR00612">
    <property type="entry name" value="ispG_gcpE"/>
    <property type="match status" value="1"/>
</dbReference>
<dbReference type="NCBIfam" id="NF001540">
    <property type="entry name" value="PRK00366.1"/>
    <property type="match status" value="1"/>
</dbReference>
<dbReference type="PANTHER" id="PTHR30454">
    <property type="entry name" value="4-HYDROXY-3-METHYLBUT-2-EN-1-YL DIPHOSPHATE SYNTHASE"/>
    <property type="match status" value="1"/>
</dbReference>
<dbReference type="PANTHER" id="PTHR30454:SF0">
    <property type="entry name" value="4-HYDROXY-3-METHYLBUT-2-EN-1-YL DIPHOSPHATE SYNTHASE (FERREDOXIN), CHLOROPLASTIC"/>
    <property type="match status" value="1"/>
</dbReference>
<dbReference type="Pfam" id="PF04551">
    <property type="entry name" value="GcpE"/>
    <property type="match status" value="1"/>
</dbReference>
<dbReference type="PIRSF" id="PIRSF004640">
    <property type="entry name" value="IspG"/>
    <property type="match status" value="1"/>
</dbReference>
<dbReference type="SUPFAM" id="SSF51717">
    <property type="entry name" value="Dihydropteroate synthetase-like"/>
    <property type="match status" value="1"/>
</dbReference>
<dbReference type="SUPFAM" id="SSF56014">
    <property type="entry name" value="Nitrite and sulphite reductase 4Fe-4S domain-like"/>
    <property type="match status" value="1"/>
</dbReference>
<evidence type="ECO:0000255" key="1">
    <source>
        <dbReference type="HAMAP-Rule" id="MF_00159"/>
    </source>
</evidence>
<reference key="1">
    <citation type="journal article" date="2007" name="Genome Res.">
        <title>Genome characteristics of facultatively symbiotic Frankia sp. strains reflect host range and host plant biogeography.</title>
        <authorList>
            <person name="Normand P."/>
            <person name="Lapierre P."/>
            <person name="Tisa L.S."/>
            <person name="Gogarten J.P."/>
            <person name="Alloisio N."/>
            <person name="Bagnarol E."/>
            <person name="Bassi C.A."/>
            <person name="Berry A.M."/>
            <person name="Bickhart D.M."/>
            <person name="Choisne N."/>
            <person name="Couloux A."/>
            <person name="Cournoyer B."/>
            <person name="Cruveiller S."/>
            <person name="Daubin V."/>
            <person name="Demange N."/>
            <person name="Francino M.P."/>
            <person name="Goltsman E."/>
            <person name="Huang Y."/>
            <person name="Kopp O.R."/>
            <person name="Labarre L."/>
            <person name="Lapidus A."/>
            <person name="Lavire C."/>
            <person name="Marechal J."/>
            <person name="Martinez M."/>
            <person name="Mastronunzio J.E."/>
            <person name="Mullin B.C."/>
            <person name="Niemann J."/>
            <person name="Pujic P."/>
            <person name="Rawnsley T."/>
            <person name="Rouy Z."/>
            <person name="Schenowitz C."/>
            <person name="Sellstedt A."/>
            <person name="Tavares F."/>
            <person name="Tomkins J.P."/>
            <person name="Vallenet D."/>
            <person name="Valverde C."/>
            <person name="Wall L.G."/>
            <person name="Wang Y."/>
            <person name="Medigue C."/>
            <person name="Benson D.R."/>
        </authorList>
    </citation>
    <scope>NUCLEOTIDE SEQUENCE [LARGE SCALE GENOMIC DNA]</scope>
    <source>
        <strain>DSM 45818 / CECT 9043 / HFP020203 / CcI3</strain>
    </source>
</reference>
<proteinExistence type="inferred from homology"/>
<organism>
    <name type="scientific">Frankia casuarinae (strain DSM 45818 / CECT 9043 / HFP020203 / CcI3)</name>
    <dbReference type="NCBI Taxonomy" id="106370"/>
    <lineage>
        <taxon>Bacteria</taxon>
        <taxon>Bacillati</taxon>
        <taxon>Actinomycetota</taxon>
        <taxon>Actinomycetes</taxon>
        <taxon>Frankiales</taxon>
        <taxon>Frankiaceae</taxon>
        <taxon>Frankia</taxon>
    </lineage>
</organism>
<accession>Q2J717</accession>
<sequence length="384" mass="40140">MTVTLGMPTAPARPLGTRRHSRQIHVGNVLVGGDAPVSVQSMCTTLTSDVNATLQQIAQLTASGCQIVRVAVPSQDDADALAAIARKSPIPVIADIHFQPKYVFAAIDAGCAAVRVNPGNIKAFDDKVGEIARAAKAAGVPIRIGVNAGSLDKRLLAKYGKATPEALTESALWECSLFEEHDFRDIKISVKHHDPVVMIQAYRLLAQACDYPLHLGVTEAGPSFQGTVKSAVAFGALLAEGIGDTIRVSLSAPPVEEVKVGTAILESLGLRQRKLEIVSCPSCGRAQVDVYTLANQVSAGLEGMEVPLRVAVMGCVVNGPGEAREADLGVASGNGKGQIFVRGEVVKTVPEAQIVETLIEEAMRLAEEMAADGTPSGEPSVSVG</sequence>
<name>ISPG_FRACC</name>